<dbReference type="EC" id="3.1.-.-" evidence="5"/>
<dbReference type="EMBL" id="AJ410615">
    <property type="protein sequence ID" value="CAC85163.1"/>
    <property type="molecule type" value="Genomic_RNA"/>
</dbReference>
<dbReference type="EMBL" id="AJ410619">
    <property type="protein sequence ID" value="CAC85166.1"/>
    <property type="molecule type" value="Genomic_RNA"/>
</dbReference>
<dbReference type="EMBL" id="KC848494">
    <property type="protein sequence ID" value="AGR50900.1"/>
    <property type="molecule type" value="Viral_cRNA"/>
</dbReference>
<dbReference type="EMBL" id="KC848496">
    <property type="protein sequence ID" value="AGR50902.1"/>
    <property type="molecule type" value="Viral_cRNA"/>
</dbReference>
<dbReference type="EMBL" id="KC848497">
    <property type="protein sequence ID" value="AGR50903.1"/>
    <property type="molecule type" value="Viral_cRNA"/>
</dbReference>
<dbReference type="EMBL" id="KC676590">
    <property type="protein sequence ID" value="AGO27859.1"/>
    <property type="molecule type" value="Viral_cRNA"/>
</dbReference>
<dbReference type="EMBL" id="KC676591">
    <property type="protein sequence ID" value="AGO27860.1"/>
    <property type="molecule type" value="Viral_cRNA"/>
</dbReference>
<dbReference type="EMBL" id="KC676592">
    <property type="protein sequence ID" value="AGO27861.1"/>
    <property type="molecule type" value="Viral_cRNA"/>
</dbReference>
<dbReference type="EMBL" id="KC676595">
    <property type="protein sequence ID" value="AGO27864.1"/>
    <property type="molecule type" value="Viral_cRNA"/>
</dbReference>
<dbReference type="EMBL" id="KC676597">
    <property type="protein sequence ID" value="AGO27866.1"/>
    <property type="molecule type" value="mRNA"/>
</dbReference>
<dbReference type="EMBL" id="KC676598">
    <property type="protein sequence ID" value="AGO27867.1"/>
    <property type="molecule type" value="mRNA"/>
</dbReference>
<dbReference type="EMBL" id="KC676599">
    <property type="protein sequence ID" value="AGO27868.1"/>
    <property type="molecule type" value="mRNA"/>
</dbReference>
<dbReference type="EMBL" id="KC676600">
    <property type="protein sequence ID" value="AGO27869.1"/>
    <property type="molecule type" value="mRNA"/>
</dbReference>
<dbReference type="EMBL" id="KC676601">
    <property type="protein sequence ID" value="AGO27870.1"/>
    <property type="molecule type" value="mRNA"/>
</dbReference>
<dbReference type="EMBL" id="KC676602">
    <property type="protein sequence ID" value="AGO27871.1"/>
    <property type="molecule type" value="mRNA"/>
</dbReference>
<dbReference type="EMBL" id="KC676603">
    <property type="protein sequence ID" value="AGO27872.1"/>
    <property type="molecule type" value="mRNA"/>
</dbReference>
<dbReference type="EMBL" id="KC676606">
    <property type="protein sequence ID" value="AGO27875.1"/>
    <property type="molecule type" value="mRNA"/>
</dbReference>
<dbReference type="EMBL" id="KC676608">
    <property type="protein sequence ID" value="AGO27877.1"/>
    <property type="molecule type" value="mRNA"/>
</dbReference>
<dbReference type="SMR" id="Q805Q9"/>
<dbReference type="KEGG" id="vg:2656266"/>
<dbReference type="OrthoDB" id="2640at10239"/>
<dbReference type="Proteomes" id="UP000202548">
    <property type="component" value="Genome"/>
</dbReference>
<dbReference type="GO" id="GO:0044177">
    <property type="term" value="C:host cell Golgi apparatus"/>
    <property type="evidence" value="ECO:0007669"/>
    <property type="project" value="UniProtKB-SubCell"/>
</dbReference>
<dbReference type="GO" id="GO:0044220">
    <property type="term" value="C:host cell perinuclear region of cytoplasm"/>
    <property type="evidence" value="ECO:0007669"/>
    <property type="project" value="UniProtKB-SubCell"/>
</dbReference>
<dbReference type="GO" id="GO:1990904">
    <property type="term" value="C:ribonucleoprotein complex"/>
    <property type="evidence" value="ECO:0007669"/>
    <property type="project" value="UniProtKB-KW"/>
</dbReference>
<dbReference type="GO" id="GO:0019013">
    <property type="term" value="C:viral nucleocapsid"/>
    <property type="evidence" value="ECO:0007669"/>
    <property type="project" value="UniProtKB-KW"/>
</dbReference>
<dbReference type="GO" id="GO:0004519">
    <property type="term" value="F:endonuclease activity"/>
    <property type="evidence" value="ECO:0007669"/>
    <property type="project" value="UniProtKB-KW"/>
</dbReference>
<dbReference type="GO" id="GO:0003723">
    <property type="term" value="F:RNA binding"/>
    <property type="evidence" value="ECO:0007669"/>
    <property type="project" value="UniProtKB-KW"/>
</dbReference>
<dbReference type="Gene3D" id="1.20.58.90">
    <property type="match status" value="1"/>
</dbReference>
<dbReference type="InterPro" id="IPR002214">
    <property type="entry name" value="Hanta_nucleocap"/>
</dbReference>
<dbReference type="Pfam" id="PF00846">
    <property type="entry name" value="Hanta_nucleocap"/>
    <property type="match status" value="1"/>
</dbReference>
<dbReference type="PIRSF" id="PIRSF003949">
    <property type="entry name" value="N_HantaV"/>
    <property type="match status" value="1"/>
</dbReference>
<keyword id="KW-0143">Chaperone</keyword>
<keyword id="KW-0175">Coiled coil</keyword>
<keyword id="KW-0255">Endonuclease</keyword>
<keyword id="KW-1035">Host cytoplasm</keyword>
<keyword id="KW-1040">Host Golgi apparatus</keyword>
<keyword id="KW-0378">Hydrolase</keyword>
<keyword id="KW-0540">Nuclease</keyword>
<keyword id="KW-0687">Ribonucleoprotein</keyword>
<keyword id="KW-0694">RNA-binding</keyword>
<keyword id="KW-0543">Viral nucleoprotein</keyword>
<keyword id="KW-0946">Virion</keyword>
<comment type="function">
    <text evidence="1 2 5 8">Encapsidates the genome protecting it from nucleases (Probable). The encapsidated genomic RNA is termed the nucleocapsid (NC) and serves as template for transcription and replication (Probable). The nucleocapsid has a left-handed helical structure (By similarity). As a trimer, specifically binds and acts as a chaperone to unwind the panhandle structure formed by the viral RNA (vRNA) termini (By similarity). Involved in the transcription and replication initiation of vRNA by mediating primer annealing (By similarity). Plays a role in cap snatching by sequestering capped RNAs in P bodies for use by the viral RdRp during transcription initiation (By similarity). Substitutes for the cellular cap-binding complex (eIF4F) to preferentially facilitate the translation of capped mRNAs (By similarity). Initiates the translation by specifically binding to the cap and 40S ribosomal subunit (By similarity). Prevents the viral glycoprotein N (Gn) from autophagy-dependent breakdown maybe by blocking autophagosome formation (By similarity). Inhibits host EIF2AK2/PKR dimerization to prevent PKR-induced translational shutdown in cells and thus the activation of the antiviral state (By similarity). Also displays sequence-unspecific DNA endonuclease activity (By similarity).</text>
</comment>
<comment type="subunit">
    <text evidence="2 3 4 5">Homotrimer (By similarity). Homomultimer (By similarity). Homomultimerizes and binds to viral genomic RNA to form the nucleocapsid (By similarity). Interacts with host MAP1LC3B; this interaction participates to the protection of Gn from virus-triggered autophagy (By similarity). Interacts with host SNAP29; this interaction participates to the protection of glycoprotein N from virus-triggered autophagy (By similarity). Interacts (via N-terminus) with host RPS19; this interaction probably mediates the loading of the 40S ribosomal subunit on viral capped mRNA during N-mediated translation initiation (By similarity). Interacts with the viral RdRp (By similarity). Interacts with host SUMO1 (via N-terminus) (By similarity). Interacts with host DAXX (By similarity). Interacts with the viral glycoprotein N (via C-terminus) (By similarity). Interacts with the viral glycoprotein C (via C-terminus) (By similarity).</text>
</comment>
<comment type="subcellular location">
    <subcellularLocation>
        <location evidence="2">Virion</location>
    </subcellularLocation>
    <subcellularLocation>
        <location evidence="2">Host cytoplasm</location>
        <location evidence="2">Host perinuclear region</location>
    </subcellularLocation>
    <subcellularLocation>
        <location evidence="2">Host Golgi apparatus</location>
        <location evidence="2">Host cis-Golgi network</location>
    </subcellularLocation>
    <text evidence="2">Internal protein of virus particle.</text>
</comment>
<comment type="domain">
    <text evidence="2 5">The N-terminus is required for chaperone activity and, in trimeric form, this region likely serves in high affinity vRNA panhandle recognition (By similarity). The N-terminus also contains a coiled coil region, which probably participates in but is insufficient to initiate N trimerization (By similarity). The YxxL motif is indispensable for the interaction with host MAP1LC3B (By similarity). The central region is involved in specific RNA-binding (By similarity). Has distinct cap- and RNA-binding sites so it can bind simultaneously both the vRNA and mRNA cap (By similarity).</text>
</comment>
<comment type="similarity">
    <text evidence="8">Belongs to the hantavirus nucleocapsid protein family.</text>
</comment>
<reference key="1">
    <citation type="journal article" date="2003" name="J. Med. Virol.">
        <title>Genetic characterization of new Dobrava hantavirus isolate from Greece.</title>
        <authorList>
            <person name="Nemirov K."/>
            <person name="Vapalahti O."/>
            <person name="Papa A."/>
            <person name="Plyusnina A."/>
            <person name="Lundkvist A."/>
            <person name="Antoniadis A."/>
            <person name="Plyusnin A."/>
        </authorList>
    </citation>
    <scope>NUCLEOTIDE SEQUENCE [GENOMIC RNA]</scope>
    <source>
        <strain>DOBV/Ano-Poroia/13Af/99</strain>
        <strain>Isolate DOBV/Ano-Poroia/Afl9/1999</strain>
    </source>
</reference>
<reference key="2">
    <citation type="submission" date="2013-04" db="EMBL/GenBank/DDBJ databases">
        <title>Not all hantavirus sequences derived from Apodemus agrarius belongs to Saaremaa virus.</title>
        <authorList>
            <person name="Nemeth V."/>
        </authorList>
    </citation>
    <scope>NUCLEOTIDE SEQUENCE [GENOMIC RNA]</scope>
    <source>
        <strain evidence="23">Isolate DOB/Gola/242Af/07</strain>
        <strain evidence="24">Isolate DOB/Gola/291Af/07</strain>
        <strain evidence="22">Isolate DOB/Pecs/210Af/07</strain>
    </source>
</reference>
<reference key="3">
    <citation type="journal article" date="2014" name="Vector Borne Zoonotic Dis.">
        <title>Survey for hantaviruses, tick-borne encephalitis virus, and Rickettsia spp. in small rodents in Croatia.</title>
        <authorList>
            <person name="Svoboda P."/>
            <person name="Dobler G."/>
            <person name="Markotic A."/>
            <person name="Kurolt I.C."/>
            <person name="Speck S."/>
            <person name="Habus J."/>
            <person name="Vucelja M."/>
            <person name="Krajinovic L.C."/>
            <person name="Tadin A."/>
            <person name="Margaletic J."/>
            <person name="Essbauer S."/>
        </authorList>
    </citation>
    <scope>NUCLEOTIDE SEQUENCE [MRNA]</scope>
    <source>
        <strain evidence="9">Isolate DOBV/Croatia_Gerovo/Af894/2008</strain>
        <strain evidence="10">Isolate DOBV/Croatia_Gerovo/Af903/2008</strain>
        <strain evidence="11">Isolate DOBV/Croatia_Gerovo/Af910/2008</strain>
        <strain evidence="12">Isolate DOBV/Croatia_Gerovo/Af957/2008</strain>
        <strain evidence="13">Isolate DOBV/Croatia_Gerovo/Af965/2008</strain>
        <strain evidence="14">Isolate DOBV/Croatia_Gerovo/Af966/2008</strain>
        <strain evidence="15">Isolate DOBV/Croatia_Gerovo/Af967/2008</strain>
        <strain evidence="16">Isolate DOBV/Croatia_Gerovo/Af968/2008</strain>
        <strain evidence="17">Isolate DOBV/Croatia_Gerovo/Af970/2008</strain>
        <strain evidence="18">Isolate DOBV/Croatia_Zutica/Af813/2007</strain>
        <strain evidence="19">Isolate DOBV/Croatia_Zutica/Af815/2007</strain>
        <strain evidence="20">Isolate DOBV/Croatia_Zutica/As822/2007</strain>
        <strain evidence="21">Isolate DOBV/Croatia_Zutica/As825/2007</strain>
    </source>
</reference>
<accession>Q805Q9</accession>
<gene>
    <name type="primary">N</name>
</gene>
<feature type="chain" id="PRO_0000455184" description="Nucleoprotein">
    <location>
        <begin position="1"/>
        <end position="429"/>
    </location>
</feature>
<feature type="region of interest" description="Viral panhandle binding" evidence="5">
    <location>
        <begin position="1"/>
        <end position="175"/>
    </location>
</feature>
<feature type="region of interest" description="Chaperone activity" evidence="5">
    <location>
        <begin position="1"/>
        <end position="100"/>
    </location>
</feature>
<feature type="region of interest" description="Homomultimerization" evidence="4">
    <location>
        <begin position="1"/>
        <end position="79"/>
    </location>
</feature>
<feature type="region of interest" description="RdRP binding" evidence="5">
    <location>
        <begin position="1"/>
        <end position="50"/>
    </location>
</feature>
<feature type="region of interest" description="Disordered" evidence="7">
    <location>
        <begin position="27"/>
        <end position="46"/>
    </location>
</feature>
<feature type="region of interest" description="Interaction with glycoprotein N" evidence="4">
    <location>
        <begin position="80"/>
        <end position="248"/>
    </location>
</feature>
<feature type="region of interest" description="Homomultimerization" evidence="2">
    <location>
        <begin position="100"/>
        <end position="125"/>
    </location>
</feature>
<feature type="region of interest" description="Interaction with host RPS19" evidence="5">
    <location>
        <begin position="150"/>
        <end position="175"/>
    </location>
</feature>
<feature type="region of interest" description="Viral RNA-binding" evidence="2">
    <location>
        <begin position="175"/>
        <end position="217"/>
    </location>
</feature>
<feature type="region of interest" description="Interaction with host UBE2I/UBC9" evidence="2">
    <location>
        <begin position="188"/>
        <end position="191"/>
    </location>
</feature>
<feature type="region of interest" description="Interaction with host DAXX" evidence="3">
    <location>
        <begin position="373"/>
        <end position="429"/>
    </location>
</feature>
<feature type="region of interest" description="Homomultimerization" evidence="4">
    <location>
        <begin position="373"/>
        <end position="421"/>
    </location>
</feature>
<feature type="coiled-coil region" evidence="6">
    <location>
        <begin position="4"/>
        <end position="31"/>
    </location>
</feature>
<feature type="short sequence motif" description="YxxL" evidence="2">
    <location>
        <begin position="178"/>
        <end position="181"/>
    </location>
</feature>
<feature type="site" description="Important for the endonuclease activity" evidence="5">
    <location>
        <position position="88"/>
    </location>
</feature>
<feature type="site" description="Important for the endonuclease activity" evidence="5">
    <location>
        <position position="103"/>
    </location>
</feature>
<proteinExistence type="evidence at transcript level"/>
<organismHost>
    <name type="scientific">Apodemus agrarius</name>
    <name type="common">Eurasian field mouse</name>
    <dbReference type="NCBI Taxonomy" id="39030"/>
</organismHost>
<organismHost>
    <name type="scientific">Apodemus flavicollis</name>
    <name type="common">Yellow-necked field mouse</name>
    <dbReference type="NCBI Taxonomy" id="54292"/>
</organismHost>
<organismHost>
    <name type="scientific">Apodemus ponticus</name>
    <name type="common">Caucasus field mouse</name>
    <dbReference type="NCBI Taxonomy" id="134909"/>
</organismHost>
<organismHost>
    <name type="scientific">Homo sapiens</name>
    <name type="common">Human</name>
    <dbReference type="NCBI Taxonomy" id="9606"/>
</organismHost>
<evidence type="ECO:0000250" key="1">
    <source>
        <dbReference type="UniProtKB" id="O36307"/>
    </source>
</evidence>
<evidence type="ECO:0000250" key="2">
    <source>
        <dbReference type="UniProtKB" id="P05133"/>
    </source>
</evidence>
<evidence type="ECO:0000250" key="3">
    <source>
        <dbReference type="UniProtKB" id="P27313"/>
    </source>
</evidence>
<evidence type="ECO:0000250" key="4">
    <source>
        <dbReference type="UniProtKB" id="Q88918"/>
    </source>
</evidence>
<evidence type="ECO:0000250" key="5">
    <source>
        <dbReference type="UniProtKB" id="Q89462"/>
    </source>
</evidence>
<evidence type="ECO:0000255" key="6"/>
<evidence type="ECO:0000256" key="7">
    <source>
        <dbReference type="SAM" id="MobiDB-lite"/>
    </source>
</evidence>
<evidence type="ECO:0000305" key="8"/>
<evidence type="ECO:0000312" key="9">
    <source>
        <dbReference type="EMBL" id="AGO27859.1"/>
    </source>
</evidence>
<evidence type="ECO:0000312" key="10">
    <source>
        <dbReference type="EMBL" id="AGO27860.1"/>
    </source>
</evidence>
<evidence type="ECO:0000312" key="11">
    <source>
        <dbReference type="EMBL" id="AGO27861.1"/>
    </source>
</evidence>
<evidence type="ECO:0000312" key="12">
    <source>
        <dbReference type="EMBL" id="AGO27864.1"/>
    </source>
</evidence>
<evidence type="ECO:0000312" key="13">
    <source>
        <dbReference type="EMBL" id="AGO27866.1"/>
    </source>
</evidence>
<evidence type="ECO:0000312" key="14">
    <source>
        <dbReference type="EMBL" id="AGO27867.1"/>
    </source>
</evidence>
<evidence type="ECO:0000312" key="15">
    <source>
        <dbReference type="EMBL" id="AGO27868.1"/>
    </source>
</evidence>
<evidence type="ECO:0000312" key="16">
    <source>
        <dbReference type="EMBL" id="AGO27869.1"/>
    </source>
</evidence>
<evidence type="ECO:0000312" key="17">
    <source>
        <dbReference type="EMBL" id="AGO27870.1"/>
    </source>
</evidence>
<evidence type="ECO:0000312" key="18">
    <source>
        <dbReference type="EMBL" id="AGO27871.1"/>
    </source>
</evidence>
<evidence type="ECO:0000312" key="19">
    <source>
        <dbReference type="EMBL" id="AGO27872.1"/>
    </source>
</evidence>
<evidence type="ECO:0000312" key="20">
    <source>
        <dbReference type="EMBL" id="AGO27875.1"/>
    </source>
</evidence>
<evidence type="ECO:0000312" key="21">
    <source>
        <dbReference type="EMBL" id="AGO27877.1"/>
    </source>
</evidence>
<evidence type="ECO:0000312" key="22">
    <source>
        <dbReference type="EMBL" id="AGR50900.1"/>
    </source>
</evidence>
<evidence type="ECO:0000312" key="23">
    <source>
        <dbReference type="EMBL" id="AGR50902.1"/>
    </source>
</evidence>
<evidence type="ECO:0000312" key="24">
    <source>
        <dbReference type="EMBL" id="AGR50903.1"/>
    </source>
</evidence>
<sequence>MATLEELQKEINNHEGQLVIARQKVKDAEKQYEKDPDDLNKRALSDRESIAQSIQGKIDELRRQLADRVAAGKNIGKERDPTGLDPGDHLKEKSMLSYGNVIDLNHLDIDEPTGQTADWLSIVVYLTSFVVPILLKALYMLTTRGRQTTKDNKGMRIRFKDDSSFEDVNGIRKPKHLFLSMPNAQSSMKADEITPGRFRTAICGLYPAQVKARNLISPVMSVIGFLALAKNWTERVEEWLDLPCKLLSEPSPTSLTKGPSTNRDYLNQRQGALAKMETKEAQAVRKHAIDAGCNLIDHIDSPSSIWVFAGAPDRCPPTCLFIAGMAELGAFFAVLQDMRNTIMASKTIGTSEEKLKKKSSFYQSYLRRTQSMGIQLDQRIIVLFMVDWGKEAVDSFHLGDDMDPELRGLAQALIDQKVKEISNQEPLKL</sequence>
<organism>
    <name type="scientific">Dobrava-Belgrade orthohantavirus</name>
    <name type="common">DOBV</name>
    <name type="synonym">Dobrava virus</name>
    <dbReference type="NCBI Taxonomy" id="3052477"/>
    <lineage>
        <taxon>Viruses</taxon>
        <taxon>Riboviria</taxon>
        <taxon>Orthornavirae</taxon>
        <taxon>Negarnaviricota</taxon>
        <taxon>Polyploviricotina</taxon>
        <taxon>Ellioviricetes</taxon>
        <taxon>Bunyavirales</taxon>
        <taxon>Hantaviridae</taxon>
        <taxon>Mammantavirinae</taxon>
        <taxon>Orthohantavirus</taxon>
    </lineage>
</organism>
<protein>
    <recommendedName>
        <fullName>Nucleoprotein</fullName>
        <ecNumber evidence="5">3.1.-.-</ecNumber>
    </recommendedName>
    <alternativeName>
        <fullName>Nucleocapsid protein</fullName>
        <shortName>Protein N</shortName>
    </alternativeName>
</protein>
<name>NCAP_DOBV</name>